<name>CRYAA_SPAEH</name>
<accession>P15990</accession>
<accession>Q64211</accession>
<gene>
    <name type="primary">CRYAA</name>
</gene>
<proteinExistence type="inferred from homology"/>
<dbReference type="EMBL" id="M17249">
    <property type="protein sequence ID" value="AAA66165.1"/>
    <property type="molecule type" value="Genomic_DNA"/>
</dbReference>
<dbReference type="EMBL" id="M17249">
    <property type="protein sequence ID" value="AAA66166.1"/>
    <property type="molecule type" value="Genomic_DNA"/>
</dbReference>
<dbReference type="EMBL" id="M17247">
    <property type="protein sequence ID" value="AAA66166.1"/>
    <property type="status" value="JOINED"/>
    <property type="molecule type" value="Genomic_DNA"/>
</dbReference>
<dbReference type="PIR" id="A28332">
    <property type="entry name" value="A28332"/>
</dbReference>
<dbReference type="SMR" id="P15990"/>
<dbReference type="GlyCosmos" id="P15990">
    <property type="glycosylation" value="1 site, No reported glycans"/>
</dbReference>
<dbReference type="GO" id="GO:0005737">
    <property type="term" value="C:cytoplasm"/>
    <property type="evidence" value="ECO:0000250"/>
    <property type="project" value="UniProtKB"/>
</dbReference>
<dbReference type="GO" id="GO:0005634">
    <property type="term" value="C:nucleus"/>
    <property type="evidence" value="ECO:0000250"/>
    <property type="project" value="UniProtKB"/>
</dbReference>
<dbReference type="GO" id="GO:0046872">
    <property type="term" value="F:metal ion binding"/>
    <property type="evidence" value="ECO:0007669"/>
    <property type="project" value="UniProtKB-KW"/>
</dbReference>
<dbReference type="GO" id="GO:0005212">
    <property type="term" value="F:structural constituent of eye lens"/>
    <property type="evidence" value="ECO:0007669"/>
    <property type="project" value="UniProtKB-KW"/>
</dbReference>
<dbReference type="GO" id="GO:0051082">
    <property type="term" value="F:unfolded protein binding"/>
    <property type="evidence" value="ECO:0007669"/>
    <property type="project" value="TreeGrafter"/>
</dbReference>
<dbReference type="GO" id="GO:0002088">
    <property type="term" value="P:lens development in camera-type eye"/>
    <property type="evidence" value="ECO:0007669"/>
    <property type="project" value="TreeGrafter"/>
</dbReference>
<dbReference type="GO" id="GO:0043066">
    <property type="term" value="P:negative regulation of apoptotic process"/>
    <property type="evidence" value="ECO:0007669"/>
    <property type="project" value="TreeGrafter"/>
</dbReference>
<dbReference type="GO" id="GO:0042026">
    <property type="term" value="P:protein refolding"/>
    <property type="evidence" value="ECO:0007669"/>
    <property type="project" value="TreeGrafter"/>
</dbReference>
<dbReference type="GO" id="GO:0009408">
    <property type="term" value="P:response to heat"/>
    <property type="evidence" value="ECO:0007669"/>
    <property type="project" value="TreeGrafter"/>
</dbReference>
<dbReference type="FunFam" id="2.60.40.790:FF:000008">
    <property type="entry name" value="Alpha-crystallin A chain"/>
    <property type="match status" value="1"/>
</dbReference>
<dbReference type="Gene3D" id="2.60.40.790">
    <property type="match status" value="1"/>
</dbReference>
<dbReference type="InterPro" id="IPR002068">
    <property type="entry name" value="A-crystallin/Hsp20_dom"/>
</dbReference>
<dbReference type="InterPro" id="IPR001436">
    <property type="entry name" value="Alpha-crystallin/sHSP_animal"/>
</dbReference>
<dbReference type="InterPro" id="IPR003090">
    <property type="entry name" value="Alpha-crystallin_N"/>
</dbReference>
<dbReference type="InterPro" id="IPR008978">
    <property type="entry name" value="HSP20-like_chaperone"/>
</dbReference>
<dbReference type="PANTHER" id="PTHR45640:SF14">
    <property type="entry name" value="ALPHA-CRYSTALLIN A CHAIN"/>
    <property type="match status" value="1"/>
</dbReference>
<dbReference type="PANTHER" id="PTHR45640">
    <property type="entry name" value="HEAT SHOCK PROTEIN HSP-12.2-RELATED"/>
    <property type="match status" value="1"/>
</dbReference>
<dbReference type="Pfam" id="PF00525">
    <property type="entry name" value="Crystallin"/>
    <property type="match status" value="1"/>
</dbReference>
<dbReference type="Pfam" id="PF00011">
    <property type="entry name" value="HSP20"/>
    <property type="match status" value="1"/>
</dbReference>
<dbReference type="PRINTS" id="PR00299">
    <property type="entry name" value="ACRYSTALLIN"/>
</dbReference>
<dbReference type="SUPFAM" id="SSF49764">
    <property type="entry name" value="HSP20-like chaperones"/>
    <property type="match status" value="1"/>
</dbReference>
<dbReference type="PROSITE" id="PS01031">
    <property type="entry name" value="SHSP"/>
    <property type="match status" value="1"/>
</dbReference>
<keyword id="KW-0007">Acetylation</keyword>
<keyword id="KW-0025">Alternative splicing</keyword>
<keyword id="KW-0143">Chaperone</keyword>
<keyword id="KW-0963">Cytoplasm</keyword>
<keyword id="KW-0273">Eye lens protein</keyword>
<keyword id="KW-0325">Glycoprotein</keyword>
<keyword id="KW-0479">Metal-binding</keyword>
<keyword id="KW-0488">Methylation</keyword>
<keyword id="KW-0539">Nucleus</keyword>
<keyword id="KW-0597">Phosphoprotein</keyword>
<keyword id="KW-0862">Zinc</keyword>
<feature type="chain" id="PRO_0000125885" description="Alpha-crystallin A chain">
    <location>
        <begin position="1"/>
        <end position="196"/>
    </location>
</feature>
<feature type="domain" description="sHSP" evidence="5">
    <location>
        <begin position="76"/>
        <end position="185"/>
    </location>
</feature>
<feature type="region of interest" description="Required for complex formation with BFSP1 and BFSP2" evidence="4">
    <location>
        <begin position="1"/>
        <end position="63"/>
    </location>
</feature>
<feature type="region of interest" description="Disordered" evidence="6">
    <location>
        <begin position="170"/>
        <end position="196"/>
    </location>
</feature>
<feature type="compositionally biased region" description="Basic and acidic residues" evidence="6">
    <location>
        <begin position="176"/>
        <end position="190"/>
    </location>
</feature>
<feature type="binding site" evidence="2">
    <location>
        <position position="123"/>
    </location>
    <ligand>
        <name>Zn(2+)</name>
        <dbReference type="ChEBI" id="CHEBI:29105"/>
        <label>1</label>
    </ligand>
</feature>
<feature type="binding site" evidence="2">
    <location>
        <position position="125"/>
    </location>
    <ligand>
        <name>Zn(2+)</name>
        <dbReference type="ChEBI" id="CHEBI:29105"/>
        <label>1</label>
    </ligand>
</feature>
<feature type="binding site" evidence="2">
    <location>
        <position position="130"/>
    </location>
    <ligand>
        <name>Zn(2+)</name>
        <dbReference type="ChEBI" id="CHEBI:29105"/>
        <label>2</label>
    </ligand>
</feature>
<feature type="binding site" evidence="2">
    <location>
        <position position="177"/>
    </location>
    <ligand>
        <name>Zn(2+)</name>
        <dbReference type="ChEBI" id="CHEBI:29105"/>
        <label>3</label>
    </ligand>
</feature>
<feature type="modified residue" description="N-acetylmethionine" evidence="3 7">
    <location>
        <position position="1"/>
    </location>
</feature>
<feature type="modified residue" description="Deamidated glutamine; partial" evidence="1">
    <location>
        <position position="6"/>
    </location>
</feature>
<feature type="modified residue" description="Phosphoserine" evidence="4">
    <location>
        <position position="45"/>
    </location>
</feature>
<feature type="modified residue" description="Deamidated glutamine; partial" evidence="1">
    <location>
        <position position="50"/>
    </location>
</feature>
<feature type="modified residue" description="N6-acetyllysine" evidence="4">
    <location>
        <position position="93"/>
    </location>
</feature>
<feature type="modified residue" description="N6-acetyllysine" evidence="4">
    <location>
        <position position="122"/>
    </location>
</feature>
<feature type="modified residue" description="Deamidated asparagine; partial" evidence="1">
    <location>
        <position position="124"/>
    </location>
</feature>
<feature type="modified residue" description="Phosphoserine" evidence="2">
    <location>
        <position position="145"/>
    </location>
</feature>
<feature type="modified residue" description="Deamidated glutamine; partial" evidence="1">
    <location>
        <position position="170"/>
    </location>
</feature>
<feature type="glycosylation site" description="O-linked (GlcNAc) serine" evidence="1">
    <location>
        <position position="185"/>
    </location>
</feature>
<feature type="splice variant" id="VSP_011918" description="In isoform 2." evidence="7">
    <location>
        <begin position="64"/>
        <end position="86"/>
    </location>
</feature>
<reference key="1">
    <citation type="journal article" date="1987" name="Proc. Natl. Acad. Sci. U.S.A.">
        <title>The lens protein alpha A-crystallin of the blind mole rat, Spalax ehrenbergi: evolutionary change and functional constraints.</title>
        <authorList>
            <person name="Hendriks W."/>
            <person name="Leunissen J."/>
            <person name="Nevo E."/>
            <person name="Bloemendal H."/>
            <person name="de Jong W.W."/>
        </authorList>
    </citation>
    <scope>NUCLEOTIDE SEQUENCE [GENOMIC DNA] (ISOFORMS 1 AND 2)</scope>
</reference>
<comment type="function">
    <text evidence="4">Contributes to the transparency and refractive index of the lens. Acts as a chaperone, preventing aggregation of various proteins under a wide range of stress conditions. Required for the correct formation of lens intermediate filaments as part of a complex composed of BFSP1, BFSP2 and CRYAA.</text>
</comment>
<comment type="subunit">
    <text evidence="2 4">Heteromer composed of three CRYAA and one CRYAB subunits. Inter-subunit bridging via zinc ions enhances stability, which is crucial as there is no protein turn over in the lens. Can also form homodimers and homotetramers (dimers of dimers) which serve as the building blocks of homooligomers (By similarity). Within homooligomers, the zinc-binding motif is created from residues of 3 different molecules. His-123 and Glu-125 from one molecule are ligands of the zinc ion, and His-130 and His-177 residues from additional molecules complete the site with tetrahedral coordination geometry (By similarity). Part of a complex required for lens intermediate filament formation composed of BFSP1, BFSP2 and CRYAA (By similarity).</text>
</comment>
<comment type="subcellular location">
    <subcellularLocation>
        <location evidence="4">Cytoplasm</location>
    </subcellularLocation>
    <subcellularLocation>
        <location evidence="4">Nucleus</location>
    </subcellularLocation>
    <text evidence="4">Translocates to the nucleus during heat shock and resides in sub-nuclear structures known as SC35 speckles or nuclear splicing speckles.</text>
</comment>
<comment type="alternative products">
    <event type="alternative splicing"/>
    <isoform>
        <id>P15990-1</id>
        <name>1</name>
        <name>Minor</name>
        <name>Alpha-A(ins)</name>
        <sequence type="displayed"/>
    </isoform>
    <isoform>
        <id>P15990-2</id>
        <id>Q64211-1</id>
        <name>2</name>
        <name>Major</name>
        <sequence type="described" ref="VSP_011918"/>
    </isoform>
</comment>
<comment type="PTM">
    <text evidence="4">Acetylation at Lys-93 may increase chaperone activity.</text>
</comment>
<comment type="PTM">
    <text evidence="4">Undergoes age-dependent proteolytical cleavage at the C-terminus.</text>
</comment>
<comment type="similarity">
    <text evidence="5">Belongs to the small heat shock protein (HSP20) family.</text>
</comment>
<sequence>MDVTIQHPWFKHALGPFYPSRLFDQFFGQGLFEYDLLPFLSSTISPYYRQTLLRTVLDSCISELMTHRWFVPHQPHAGNPENNPIKVRSDRDKFVIFLDVKHFSPEDLTVKVLEDFVEIHGKHNERQDDHGYISREFHRRYRLPSSVDQSALSCSLSADGMLTFSGPKVQSGLDAGHSERAIPVSQEEKPSSAPLF</sequence>
<protein>
    <recommendedName>
        <fullName>Alpha-crystallin A chain</fullName>
    </recommendedName>
</protein>
<evidence type="ECO:0000250" key="1"/>
<evidence type="ECO:0000250" key="2">
    <source>
        <dbReference type="UniProtKB" id="P02470"/>
    </source>
</evidence>
<evidence type="ECO:0000250" key="3">
    <source>
        <dbReference type="UniProtKB" id="P02474"/>
    </source>
</evidence>
<evidence type="ECO:0000250" key="4">
    <source>
        <dbReference type="UniProtKB" id="P02489"/>
    </source>
</evidence>
<evidence type="ECO:0000255" key="5">
    <source>
        <dbReference type="PROSITE-ProRule" id="PRU00285"/>
    </source>
</evidence>
<evidence type="ECO:0000256" key="6">
    <source>
        <dbReference type="SAM" id="MobiDB-lite"/>
    </source>
</evidence>
<evidence type="ECO:0000305" key="7"/>
<organism>
    <name type="scientific">Spalax ehrenbergi</name>
    <name type="common">Middle East blind mole rat</name>
    <name type="synonym">Nannospalax ehrenbergi</name>
    <dbReference type="NCBI Taxonomy" id="30637"/>
    <lineage>
        <taxon>Eukaryota</taxon>
        <taxon>Metazoa</taxon>
        <taxon>Chordata</taxon>
        <taxon>Craniata</taxon>
        <taxon>Vertebrata</taxon>
        <taxon>Euteleostomi</taxon>
        <taxon>Mammalia</taxon>
        <taxon>Eutheria</taxon>
        <taxon>Euarchontoglires</taxon>
        <taxon>Glires</taxon>
        <taxon>Rodentia</taxon>
        <taxon>Myomorpha</taxon>
        <taxon>Muroidea</taxon>
        <taxon>Spalacidae</taxon>
        <taxon>Spalacinae</taxon>
        <taxon>Nannospalax</taxon>
    </lineage>
</organism>